<comment type="function">
    <text evidence="1">May be involved in transcriptional regulation.</text>
</comment>
<comment type="subcellular location">
    <subcellularLocation>
        <location evidence="1">Nucleus</location>
    </subcellularLocation>
</comment>
<comment type="similarity">
    <text evidence="4">Belongs to the krueppel C2H2-type zinc-finger protein family.</text>
</comment>
<protein>
    <recommendedName>
        <fullName>Zinc finger protein 850</fullName>
    </recommendedName>
</protein>
<dbReference type="EMBL" id="AC020928">
    <property type="status" value="NOT_ANNOTATED_CDS"/>
    <property type="molecule type" value="Genomic_DNA"/>
</dbReference>
<dbReference type="CCDS" id="CCDS59379.1"/>
<dbReference type="RefSeq" id="NP_001180481.1">
    <property type="nucleotide sequence ID" value="NM_001193552.2"/>
</dbReference>
<dbReference type="SMR" id="A8MQ14"/>
<dbReference type="BioGRID" id="131203">
    <property type="interactions" value="6"/>
</dbReference>
<dbReference type="FunCoup" id="A8MQ14">
    <property type="interactions" value="6"/>
</dbReference>
<dbReference type="IntAct" id="A8MQ14">
    <property type="interactions" value="5"/>
</dbReference>
<dbReference type="STRING" id="9606.ENSP00000464976"/>
<dbReference type="iPTMnet" id="A8MQ14"/>
<dbReference type="PhosphoSitePlus" id="A8MQ14"/>
<dbReference type="BioMuta" id="ZNF850"/>
<dbReference type="jPOST" id="A8MQ14"/>
<dbReference type="MassIVE" id="A8MQ14"/>
<dbReference type="PaxDb" id="9606-ENSP00000464976"/>
<dbReference type="PeptideAtlas" id="A8MQ14"/>
<dbReference type="ProteomicsDB" id="1933"/>
<dbReference type="Antibodypedia" id="71746">
    <property type="antibodies" value="4 antibodies from 4 providers"/>
</dbReference>
<dbReference type="Ensembl" id="ENST00000591344.2">
    <property type="protein sequence ID" value="ENSP00000464976.1"/>
    <property type="gene ID" value="ENSG00000267041.6"/>
</dbReference>
<dbReference type="GeneID" id="342892"/>
<dbReference type="KEGG" id="hsa:342892"/>
<dbReference type="MANE-Select" id="ENST00000591344.2">
    <property type="protein sequence ID" value="ENSP00000464976.1"/>
    <property type="RefSeq nucleotide sequence ID" value="NM_001193552.2"/>
    <property type="RefSeq protein sequence ID" value="NP_001180481.1"/>
</dbReference>
<dbReference type="UCSC" id="uc010efc.4">
    <property type="organism name" value="human"/>
</dbReference>
<dbReference type="AGR" id="HGNC:27994"/>
<dbReference type="CTD" id="342892"/>
<dbReference type="DisGeNET" id="342892"/>
<dbReference type="GeneCards" id="ZNF850"/>
<dbReference type="HGNC" id="HGNC:27994">
    <property type="gene designation" value="ZNF850"/>
</dbReference>
<dbReference type="HPA" id="ENSG00000267041">
    <property type="expression patterns" value="Tissue enhanced (bone)"/>
</dbReference>
<dbReference type="neXtProt" id="NX_A8MQ14"/>
<dbReference type="OpenTargets" id="ENSG00000267041"/>
<dbReference type="VEuPathDB" id="HostDB:ENSG00000267041"/>
<dbReference type="eggNOG" id="KOG1721">
    <property type="taxonomic scope" value="Eukaryota"/>
</dbReference>
<dbReference type="GeneTree" id="ENSGT01030000234576"/>
<dbReference type="HOGENOM" id="CLU_002678_17_1_1"/>
<dbReference type="InParanoid" id="A8MQ14"/>
<dbReference type="OMA" id="AKYDEHT"/>
<dbReference type="OrthoDB" id="9411774at2759"/>
<dbReference type="PAN-GO" id="A8MQ14">
    <property type="GO annotations" value="4 GO annotations based on evolutionary models"/>
</dbReference>
<dbReference type="PhylomeDB" id="A8MQ14"/>
<dbReference type="PathwayCommons" id="A8MQ14"/>
<dbReference type="SignaLink" id="A8MQ14"/>
<dbReference type="BioGRID-ORCS" id="342892">
    <property type="hits" value="13 hits in 1120 CRISPR screens"/>
</dbReference>
<dbReference type="ChiTaRS" id="ZNF850">
    <property type="organism name" value="human"/>
</dbReference>
<dbReference type="GenomeRNAi" id="342892"/>
<dbReference type="Pharos" id="A8MQ14">
    <property type="development level" value="Tdark"/>
</dbReference>
<dbReference type="PRO" id="PR:A8MQ14"/>
<dbReference type="Proteomes" id="UP000005640">
    <property type="component" value="Chromosome 19"/>
</dbReference>
<dbReference type="RNAct" id="A8MQ14">
    <property type="molecule type" value="protein"/>
</dbReference>
<dbReference type="Bgee" id="ENSG00000267041">
    <property type="expression patterns" value="Expressed in oocyte and 120 other cell types or tissues"/>
</dbReference>
<dbReference type="ExpressionAtlas" id="A8MQ14">
    <property type="expression patterns" value="baseline and differential"/>
</dbReference>
<dbReference type="GO" id="GO:0005634">
    <property type="term" value="C:nucleus"/>
    <property type="evidence" value="ECO:0000318"/>
    <property type="project" value="GO_Central"/>
</dbReference>
<dbReference type="GO" id="GO:0003677">
    <property type="term" value="F:DNA binding"/>
    <property type="evidence" value="ECO:0007669"/>
    <property type="project" value="UniProtKB-KW"/>
</dbReference>
<dbReference type="GO" id="GO:0008270">
    <property type="term" value="F:zinc ion binding"/>
    <property type="evidence" value="ECO:0007669"/>
    <property type="project" value="UniProtKB-KW"/>
</dbReference>
<dbReference type="GO" id="GO:0006357">
    <property type="term" value="P:regulation of transcription by RNA polymerase II"/>
    <property type="evidence" value="ECO:0000318"/>
    <property type="project" value="GO_Central"/>
</dbReference>
<dbReference type="CDD" id="cd07765">
    <property type="entry name" value="KRAB_A-box"/>
    <property type="match status" value="1"/>
</dbReference>
<dbReference type="FunFam" id="3.30.160.60:FF:001615">
    <property type="entry name" value="Zinc finger and SCAN domain containing 4"/>
    <property type="match status" value="1"/>
</dbReference>
<dbReference type="FunFam" id="3.30.160.60:FF:000478">
    <property type="entry name" value="Zinc finger protein 133"/>
    <property type="match status" value="1"/>
</dbReference>
<dbReference type="FunFam" id="3.30.160.60:FF:000020">
    <property type="entry name" value="Zinc finger protein 14 homolog"/>
    <property type="match status" value="2"/>
</dbReference>
<dbReference type="FunFam" id="3.30.160.60:FF:000295">
    <property type="entry name" value="zinc finger protein 19"/>
    <property type="match status" value="1"/>
</dbReference>
<dbReference type="FunFam" id="3.30.160.60:FF:000058">
    <property type="entry name" value="Zinc finger protein 2 homolog"/>
    <property type="match status" value="11"/>
</dbReference>
<dbReference type="FunFam" id="3.30.160.60:FF:000206">
    <property type="entry name" value="zinc finger protein 202 isoform X1"/>
    <property type="match status" value="1"/>
</dbReference>
<dbReference type="FunFam" id="3.30.160.60:FF:002343">
    <property type="entry name" value="Zinc finger protein 33A"/>
    <property type="match status" value="1"/>
</dbReference>
<dbReference type="FunFam" id="3.30.160.60:FF:000087">
    <property type="entry name" value="Zinc finger protein 354B"/>
    <property type="match status" value="1"/>
</dbReference>
<dbReference type="FunFam" id="3.30.160.60:FF:001498">
    <property type="entry name" value="Zinc finger protein 404"/>
    <property type="match status" value="1"/>
</dbReference>
<dbReference type="FunFam" id="3.30.160.60:FF:002090">
    <property type="entry name" value="Zinc finger protein 473"/>
    <property type="match status" value="1"/>
</dbReference>
<dbReference type="FunFam" id="3.30.160.60:FF:002254">
    <property type="entry name" value="Zinc finger protein 540"/>
    <property type="match status" value="4"/>
</dbReference>
<dbReference type="FunFam" id="3.30.160.60:FF:000737">
    <property type="entry name" value="Zinc finger protein 565"/>
    <property type="match status" value="3"/>
</dbReference>
<dbReference type="FunFam" id="3.30.160.60:FF:001270">
    <property type="entry name" value="zinc finger protein 583 isoform X1"/>
    <property type="match status" value="2"/>
</dbReference>
<dbReference type="FunFam" id="3.30.160.60:FF:002626">
    <property type="entry name" value="Zinc finger protein 850"/>
    <property type="match status" value="1"/>
</dbReference>
<dbReference type="FunFam" id="3.30.160.60:FF:000416">
    <property type="entry name" value="zinc finger protein 879 isoform X1"/>
    <property type="match status" value="1"/>
</dbReference>
<dbReference type="Gene3D" id="6.10.140.140">
    <property type="match status" value="1"/>
</dbReference>
<dbReference type="Gene3D" id="3.30.160.60">
    <property type="entry name" value="Classic Zinc Finger"/>
    <property type="match status" value="33"/>
</dbReference>
<dbReference type="InterPro" id="IPR001909">
    <property type="entry name" value="KRAB"/>
</dbReference>
<dbReference type="InterPro" id="IPR036051">
    <property type="entry name" value="KRAB_dom_sf"/>
</dbReference>
<dbReference type="InterPro" id="IPR050758">
    <property type="entry name" value="Znf_C2H2-type"/>
</dbReference>
<dbReference type="InterPro" id="IPR036236">
    <property type="entry name" value="Znf_C2H2_sf"/>
</dbReference>
<dbReference type="InterPro" id="IPR013087">
    <property type="entry name" value="Znf_C2H2_type"/>
</dbReference>
<dbReference type="PANTHER" id="PTHR23234:SF8">
    <property type="entry name" value="C2H2-TYPE DOMAIN-CONTAINING PROTEIN"/>
    <property type="match status" value="1"/>
</dbReference>
<dbReference type="PANTHER" id="PTHR23234">
    <property type="entry name" value="ZNF44 PROTEIN"/>
    <property type="match status" value="1"/>
</dbReference>
<dbReference type="Pfam" id="PF01352">
    <property type="entry name" value="KRAB"/>
    <property type="match status" value="1"/>
</dbReference>
<dbReference type="Pfam" id="PF00096">
    <property type="entry name" value="zf-C2H2"/>
    <property type="match status" value="30"/>
</dbReference>
<dbReference type="SMART" id="SM00349">
    <property type="entry name" value="KRAB"/>
    <property type="match status" value="1"/>
</dbReference>
<dbReference type="SMART" id="SM00355">
    <property type="entry name" value="ZnF_C2H2"/>
    <property type="match status" value="30"/>
</dbReference>
<dbReference type="SUPFAM" id="SSF57667">
    <property type="entry name" value="beta-beta-alpha zinc fingers"/>
    <property type="match status" value="19"/>
</dbReference>
<dbReference type="SUPFAM" id="SSF109640">
    <property type="entry name" value="KRAB domain (Kruppel-associated box)"/>
    <property type="match status" value="1"/>
</dbReference>
<dbReference type="PROSITE" id="PS50805">
    <property type="entry name" value="KRAB"/>
    <property type="match status" value="1"/>
</dbReference>
<dbReference type="PROSITE" id="PS00028">
    <property type="entry name" value="ZINC_FINGER_C2H2_1"/>
    <property type="match status" value="29"/>
</dbReference>
<dbReference type="PROSITE" id="PS50157">
    <property type="entry name" value="ZINC_FINGER_C2H2_2"/>
    <property type="match status" value="32"/>
</dbReference>
<gene>
    <name type="primary">ZNF850</name>
</gene>
<name>ZN850_HUMAN</name>
<reference key="1">
    <citation type="journal article" date="2004" name="Nature">
        <title>The DNA sequence and biology of human chromosome 19.</title>
        <authorList>
            <person name="Grimwood J."/>
            <person name="Gordon L.A."/>
            <person name="Olsen A.S."/>
            <person name="Terry A."/>
            <person name="Schmutz J."/>
            <person name="Lamerdin J.E."/>
            <person name="Hellsten U."/>
            <person name="Goodstein D."/>
            <person name="Couronne O."/>
            <person name="Tran-Gyamfi M."/>
            <person name="Aerts A."/>
            <person name="Altherr M."/>
            <person name="Ashworth L."/>
            <person name="Bajorek E."/>
            <person name="Black S."/>
            <person name="Branscomb E."/>
            <person name="Caenepeel S."/>
            <person name="Carrano A.V."/>
            <person name="Caoile C."/>
            <person name="Chan Y.M."/>
            <person name="Christensen M."/>
            <person name="Cleland C.A."/>
            <person name="Copeland A."/>
            <person name="Dalin E."/>
            <person name="Dehal P."/>
            <person name="Denys M."/>
            <person name="Detter J.C."/>
            <person name="Escobar J."/>
            <person name="Flowers D."/>
            <person name="Fotopulos D."/>
            <person name="Garcia C."/>
            <person name="Georgescu A.M."/>
            <person name="Glavina T."/>
            <person name="Gomez M."/>
            <person name="Gonzales E."/>
            <person name="Groza M."/>
            <person name="Hammon N."/>
            <person name="Hawkins T."/>
            <person name="Haydu L."/>
            <person name="Ho I."/>
            <person name="Huang W."/>
            <person name="Israni S."/>
            <person name="Jett J."/>
            <person name="Kadner K."/>
            <person name="Kimball H."/>
            <person name="Kobayashi A."/>
            <person name="Larionov V."/>
            <person name="Leem S.-H."/>
            <person name="Lopez F."/>
            <person name="Lou Y."/>
            <person name="Lowry S."/>
            <person name="Malfatti S."/>
            <person name="Martinez D."/>
            <person name="McCready P.M."/>
            <person name="Medina C."/>
            <person name="Morgan J."/>
            <person name="Nelson K."/>
            <person name="Nolan M."/>
            <person name="Ovcharenko I."/>
            <person name="Pitluck S."/>
            <person name="Pollard M."/>
            <person name="Popkie A.P."/>
            <person name="Predki P."/>
            <person name="Quan G."/>
            <person name="Ramirez L."/>
            <person name="Rash S."/>
            <person name="Retterer J."/>
            <person name="Rodriguez A."/>
            <person name="Rogers S."/>
            <person name="Salamov A."/>
            <person name="Salazar A."/>
            <person name="She X."/>
            <person name="Smith D."/>
            <person name="Slezak T."/>
            <person name="Solovyev V."/>
            <person name="Thayer N."/>
            <person name="Tice H."/>
            <person name="Tsai M."/>
            <person name="Ustaszewska A."/>
            <person name="Vo N."/>
            <person name="Wagner M."/>
            <person name="Wheeler J."/>
            <person name="Wu K."/>
            <person name="Xie G."/>
            <person name="Yang J."/>
            <person name="Dubchak I."/>
            <person name="Furey T.S."/>
            <person name="DeJong P."/>
            <person name="Dickson M."/>
            <person name="Gordon D."/>
            <person name="Eichler E.E."/>
            <person name="Pennacchio L.A."/>
            <person name="Richardson P."/>
            <person name="Stubbs L."/>
            <person name="Rokhsar D.S."/>
            <person name="Myers R.M."/>
            <person name="Rubin E.M."/>
            <person name="Lucas S.M."/>
        </authorList>
    </citation>
    <scope>NUCLEOTIDE SEQUENCE [LARGE SCALE GENOMIC DNA]</scope>
</reference>
<evidence type="ECO:0000250" key="1"/>
<evidence type="ECO:0000255" key="2">
    <source>
        <dbReference type="PROSITE-ProRule" id="PRU00042"/>
    </source>
</evidence>
<evidence type="ECO:0000255" key="3">
    <source>
        <dbReference type="PROSITE-ProRule" id="PRU00119"/>
    </source>
</evidence>
<evidence type="ECO:0000305" key="4"/>
<feature type="chain" id="PRO_0000332269" description="Zinc finger protein 850">
    <location>
        <begin position="1"/>
        <end position="1090"/>
    </location>
</feature>
<feature type="domain" description="KRAB" evidence="3">
    <location>
        <begin position="7"/>
        <end position="78"/>
    </location>
</feature>
<feature type="zinc finger region" description="C2H2-type 1" evidence="2">
    <location>
        <begin position="197"/>
        <end position="219"/>
    </location>
</feature>
<feature type="zinc finger region" description="C2H2-type 2; degenerate" evidence="2">
    <location>
        <begin position="225"/>
        <end position="247"/>
    </location>
</feature>
<feature type="zinc finger region" description="C2H2-type 3; degenerate" evidence="2">
    <location>
        <begin position="253"/>
        <end position="275"/>
    </location>
</feature>
<feature type="zinc finger region" description="C2H2-type 4" evidence="2">
    <location>
        <begin position="281"/>
        <end position="303"/>
    </location>
</feature>
<feature type="zinc finger region" description="C2H2-type 5" evidence="2">
    <location>
        <begin position="309"/>
        <end position="331"/>
    </location>
</feature>
<feature type="zinc finger region" description="C2H2-type 6" evidence="2">
    <location>
        <begin position="337"/>
        <end position="359"/>
    </location>
</feature>
<feature type="zinc finger region" description="C2H2-type 7" evidence="2">
    <location>
        <begin position="365"/>
        <end position="387"/>
    </location>
</feature>
<feature type="zinc finger region" description="C2H2-type 8" evidence="2">
    <location>
        <begin position="393"/>
        <end position="415"/>
    </location>
</feature>
<feature type="zinc finger region" description="C2H2-type 9" evidence="2">
    <location>
        <begin position="421"/>
        <end position="443"/>
    </location>
</feature>
<feature type="zinc finger region" description="C2H2-type 10" evidence="2">
    <location>
        <begin position="449"/>
        <end position="471"/>
    </location>
</feature>
<feature type="zinc finger region" description="C2H2-type 11" evidence="2">
    <location>
        <begin position="477"/>
        <end position="499"/>
    </location>
</feature>
<feature type="zinc finger region" description="C2H2-type 12" evidence="2">
    <location>
        <begin position="505"/>
        <end position="527"/>
    </location>
</feature>
<feature type="zinc finger region" description="C2H2-type 13" evidence="2">
    <location>
        <begin position="533"/>
        <end position="555"/>
    </location>
</feature>
<feature type="zinc finger region" description="C2H2-type 14" evidence="2">
    <location>
        <begin position="561"/>
        <end position="583"/>
    </location>
</feature>
<feature type="zinc finger region" description="C2H2-type 15" evidence="2">
    <location>
        <begin position="589"/>
        <end position="611"/>
    </location>
</feature>
<feature type="zinc finger region" description="C2H2-type 16" evidence="2">
    <location>
        <begin position="617"/>
        <end position="639"/>
    </location>
</feature>
<feature type="zinc finger region" description="C2H2-type 17" evidence="2">
    <location>
        <begin position="645"/>
        <end position="667"/>
    </location>
</feature>
<feature type="zinc finger region" description="C2H2-type 18" evidence="2">
    <location>
        <begin position="673"/>
        <end position="695"/>
    </location>
</feature>
<feature type="zinc finger region" description="C2H2-type 19" evidence="2">
    <location>
        <begin position="701"/>
        <end position="723"/>
    </location>
</feature>
<feature type="zinc finger region" description="C2H2-type 20; degenerate" evidence="2">
    <location>
        <begin position="729"/>
        <end position="751"/>
    </location>
</feature>
<feature type="zinc finger region" description="C2H2-type 21" evidence="2">
    <location>
        <begin position="757"/>
        <end position="779"/>
    </location>
</feature>
<feature type="zinc finger region" description="C2H2-type 22" evidence="2">
    <location>
        <begin position="785"/>
        <end position="807"/>
    </location>
</feature>
<feature type="zinc finger region" description="C2H2-type 23" evidence="2">
    <location>
        <begin position="813"/>
        <end position="835"/>
    </location>
</feature>
<feature type="zinc finger region" description="C2H2-type 24" evidence="2">
    <location>
        <begin position="841"/>
        <end position="863"/>
    </location>
</feature>
<feature type="zinc finger region" description="C2H2-type 25" evidence="2">
    <location>
        <begin position="869"/>
        <end position="891"/>
    </location>
</feature>
<feature type="zinc finger region" description="C2H2-type 26" evidence="2">
    <location>
        <begin position="897"/>
        <end position="919"/>
    </location>
</feature>
<feature type="zinc finger region" description="C2H2-type 27" evidence="2">
    <location>
        <begin position="925"/>
        <end position="947"/>
    </location>
</feature>
<feature type="zinc finger region" description="C2H2-type 28" evidence="2">
    <location>
        <begin position="953"/>
        <end position="975"/>
    </location>
</feature>
<feature type="zinc finger region" description="C2H2-type 29" evidence="2">
    <location>
        <begin position="981"/>
        <end position="1003"/>
    </location>
</feature>
<feature type="zinc finger region" description="C2H2-type 30" evidence="2">
    <location>
        <begin position="1009"/>
        <end position="1031"/>
    </location>
</feature>
<feature type="zinc finger region" description="C2H2-type 31" evidence="2">
    <location>
        <begin position="1037"/>
        <end position="1059"/>
    </location>
</feature>
<feature type="zinc finger region" description="C2H2-type 32" evidence="2">
    <location>
        <begin position="1065"/>
        <end position="1087"/>
    </location>
</feature>
<accession>A8MQ14</accession>
<proteinExistence type="evidence at protein level"/>
<keyword id="KW-0238">DNA-binding</keyword>
<keyword id="KW-0479">Metal-binding</keyword>
<keyword id="KW-0539">Nucleus</keyword>
<keyword id="KW-1267">Proteomics identification</keyword>
<keyword id="KW-1185">Reference proteome</keyword>
<keyword id="KW-0677">Repeat</keyword>
<keyword id="KW-0804">Transcription</keyword>
<keyword id="KW-0805">Transcription regulation</keyword>
<keyword id="KW-0862">Zinc</keyword>
<keyword id="KW-0863">Zinc-finger</keyword>
<organism>
    <name type="scientific">Homo sapiens</name>
    <name type="common">Human</name>
    <dbReference type="NCBI Taxonomy" id="9606"/>
    <lineage>
        <taxon>Eukaryota</taxon>
        <taxon>Metazoa</taxon>
        <taxon>Chordata</taxon>
        <taxon>Craniata</taxon>
        <taxon>Vertebrata</taxon>
        <taxon>Euteleostomi</taxon>
        <taxon>Mammalia</taxon>
        <taxon>Eutheria</taxon>
        <taxon>Euarchontoglires</taxon>
        <taxon>Primates</taxon>
        <taxon>Haplorrhini</taxon>
        <taxon>Catarrhini</taxon>
        <taxon>Hominidae</taxon>
        <taxon>Homo</taxon>
    </lineage>
</organism>
<sequence length="1090" mass="125431">MNMEGLVMFQDLSIDFSQEEWECLDAAQKDLYRDVMMENYSSLVSLGLSIPKPDVISLLEQGKEPWMVSRDVLGGWCRDSEFRCKTKDSCLPKEIYEVTSSQWVRMEKCHSLVGSSVRDDWECKGQFQHQDINQERYLEKAIMTYETTPTFCLQTSLTLHHRIHPGEKLYKSTECMAFKYGSELTQQQETHTGEKLYKCKECGKAFHHFSYLVKHQRIHTGEKPCACKEYGKAFISGSHLIQHQKMYTDERPHECQESVKAFRPSAHLIQHWRIHTGDKPYECKECGKSFTSGSTLNQHQQIHTGEKPYHCKQCGKSFTVGSTLIRHQQIHTGEKPYDCKECGKSFASGSALIRHQRIHTGEKPYDCKECGKSFTFHSALIRHQRIHTGEKPYDCKECGKSFTFRSGLIGHQAIHTGEKPYDCKECGKSFTAGSTLIQHQRIHTGEKPYDCKECGKSFASGSALLQHQRIHTGEKPYCCKECGKSFTFRSTRNRHQRIHTGEKPYNCKECGKSFASGSALLQHQRIHTGEKPYHCKECGKSFTFRSGLIGHQAVHTGEKPYDCKECGKSFTSRSALIQHQRIHTGEKPYHCKECGKSFTVGSTLLQHQQIHTGEKPYDCKECGKAFRLRLRLTQHQQIHTGEKPYQCQECGKAFVSVSGLTQHHRIHTGEKPYECPDCGKAFRQRTYLNQHRRIHTGEKPYECKECGKSFTFCSGLIQHQQNHTDEKPYDGKECGKSFTSHSTLIQHQQIHTGEKPYDCKECGKSFTSHSTLIQHQQIHTGEKLYDCKECGKSFTSHSTLIQHQPLHTGEKPYHCKECGKSFTLRSALIQHRPVHTGEKRYSCKECGKSFTSRSTLIEHQRIHTGEKPYHCKECGKSFAFRSAIIQHRRIHTGEKPYDCKECGKAFRRRSKLTQHQRIHTGEKPYRCHECGKAFVRFSGLTKHHSIHTGEKPYECKTCGKSFRQRTHLTLHQRIHTGDRPYECKECGKSFTCGSELIRHQRTHTGEKPYDCKECGKAFRCPSQLSQHKRIHTGEKTYQCPECGKAFFYASGLSRHQSVHTGEKPYECKTCGKAFKQLTQLTRHQRIHDLT</sequence>